<name>HUTH_BART1</name>
<comment type="catalytic activity">
    <reaction evidence="1">
        <text>L-histidine = trans-urocanate + NH4(+)</text>
        <dbReference type="Rhea" id="RHEA:21232"/>
        <dbReference type="ChEBI" id="CHEBI:17771"/>
        <dbReference type="ChEBI" id="CHEBI:28938"/>
        <dbReference type="ChEBI" id="CHEBI:57595"/>
        <dbReference type="EC" id="4.3.1.3"/>
    </reaction>
</comment>
<comment type="pathway">
    <text evidence="1">Amino-acid degradation; L-histidine degradation into L-glutamate; N-formimidoyl-L-glutamate from L-histidine: step 1/3.</text>
</comment>
<comment type="subcellular location">
    <subcellularLocation>
        <location evidence="1">Cytoplasm</location>
    </subcellularLocation>
</comment>
<comment type="PTM">
    <text evidence="1">Contains an active site 4-methylidene-imidazol-5-one (MIO), which is formed autocatalytically by cyclization and dehydration of residues Ala-Ser-Gly.</text>
</comment>
<comment type="similarity">
    <text evidence="1">Belongs to the PAL/histidase family.</text>
</comment>
<keyword id="KW-0963">Cytoplasm</keyword>
<keyword id="KW-0369">Histidine metabolism</keyword>
<keyword id="KW-0456">Lyase</keyword>
<dbReference type="EC" id="4.3.1.3" evidence="1"/>
<dbReference type="EMBL" id="AM260525">
    <property type="protein sequence ID" value="CAK01817.1"/>
    <property type="molecule type" value="Genomic_DNA"/>
</dbReference>
<dbReference type="RefSeq" id="WP_012231957.1">
    <property type="nucleotide sequence ID" value="NC_010161.1"/>
</dbReference>
<dbReference type="SMR" id="A9IVW5"/>
<dbReference type="KEGG" id="btr:BT_1465"/>
<dbReference type="eggNOG" id="COG2986">
    <property type="taxonomic scope" value="Bacteria"/>
</dbReference>
<dbReference type="HOGENOM" id="CLU_014801_4_0_5"/>
<dbReference type="UniPathway" id="UPA00379">
    <property type="reaction ID" value="UER00549"/>
</dbReference>
<dbReference type="Proteomes" id="UP000001592">
    <property type="component" value="Chromosome"/>
</dbReference>
<dbReference type="GO" id="GO:0005737">
    <property type="term" value="C:cytoplasm"/>
    <property type="evidence" value="ECO:0007669"/>
    <property type="project" value="UniProtKB-SubCell"/>
</dbReference>
<dbReference type="GO" id="GO:0004397">
    <property type="term" value="F:histidine ammonia-lyase activity"/>
    <property type="evidence" value="ECO:0007669"/>
    <property type="project" value="UniProtKB-UniRule"/>
</dbReference>
<dbReference type="GO" id="GO:0019556">
    <property type="term" value="P:L-histidine catabolic process to glutamate and formamide"/>
    <property type="evidence" value="ECO:0007669"/>
    <property type="project" value="UniProtKB-UniPathway"/>
</dbReference>
<dbReference type="GO" id="GO:0019557">
    <property type="term" value="P:L-histidine catabolic process to glutamate and formate"/>
    <property type="evidence" value="ECO:0007669"/>
    <property type="project" value="UniProtKB-UniPathway"/>
</dbReference>
<dbReference type="CDD" id="cd00332">
    <property type="entry name" value="PAL-HAL"/>
    <property type="match status" value="1"/>
</dbReference>
<dbReference type="FunFam" id="1.10.275.10:FF:000005">
    <property type="entry name" value="Histidine ammonia-lyase"/>
    <property type="match status" value="1"/>
</dbReference>
<dbReference type="FunFam" id="1.20.200.10:FF:000003">
    <property type="entry name" value="Histidine ammonia-lyase"/>
    <property type="match status" value="1"/>
</dbReference>
<dbReference type="Gene3D" id="1.20.200.10">
    <property type="entry name" value="Fumarase/aspartase (Central domain)"/>
    <property type="match status" value="1"/>
</dbReference>
<dbReference type="Gene3D" id="1.10.275.10">
    <property type="entry name" value="Fumarase/aspartase (N-terminal domain)"/>
    <property type="match status" value="1"/>
</dbReference>
<dbReference type="HAMAP" id="MF_00229">
    <property type="entry name" value="His_ammonia_lyase"/>
    <property type="match status" value="1"/>
</dbReference>
<dbReference type="InterPro" id="IPR001106">
    <property type="entry name" value="Aromatic_Lyase"/>
</dbReference>
<dbReference type="InterPro" id="IPR024083">
    <property type="entry name" value="Fumarase/histidase_N"/>
</dbReference>
<dbReference type="InterPro" id="IPR005921">
    <property type="entry name" value="HutH"/>
</dbReference>
<dbReference type="InterPro" id="IPR008948">
    <property type="entry name" value="L-Aspartase-like"/>
</dbReference>
<dbReference type="InterPro" id="IPR022313">
    <property type="entry name" value="Phe/His_NH3-lyase_AS"/>
</dbReference>
<dbReference type="NCBIfam" id="TIGR01225">
    <property type="entry name" value="hutH"/>
    <property type="match status" value="1"/>
</dbReference>
<dbReference type="NCBIfam" id="NF006871">
    <property type="entry name" value="PRK09367.1"/>
    <property type="match status" value="1"/>
</dbReference>
<dbReference type="PANTHER" id="PTHR10362">
    <property type="entry name" value="HISTIDINE AMMONIA-LYASE"/>
    <property type="match status" value="1"/>
</dbReference>
<dbReference type="Pfam" id="PF00221">
    <property type="entry name" value="Lyase_aromatic"/>
    <property type="match status" value="1"/>
</dbReference>
<dbReference type="SUPFAM" id="SSF48557">
    <property type="entry name" value="L-aspartase-like"/>
    <property type="match status" value="1"/>
</dbReference>
<dbReference type="PROSITE" id="PS00488">
    <property type="entry name" value="PAL_HISTIDASE"/>
    <property type="match status" value="1"/>
</dbReference>
<organism>
    <name type="scientific">Bartonella tribocorum (strain CIP 105476 / IBS 506)</name>
    <dbReference type="NCBI Taxonomy" id="382640"/>
    <lineage>
        <taxon>Bacteria</taxon>
        <taxon>Pseudomonadati</taxon>
        <taxon>Pseudomonadota</taxon>
        <taxon>Alphaproteobacteria</taxon>
        <taxon>Hyphomicrobiales</taxon>
        <taxon>Bartonellaceae</taxon>
        <taxon>Bartonella</taxon>
    </lineage>
</organism>
<feature type="chain" id="PRO_1000078221" description="Histidine ammonia-lyase">
    <location>
        <begin position="1"/>
        <end position="512"/>
    </location>
</feature>
<feature type="modified residue" description="2,3-didehydroalanine (Ser)" evidence="1">
    <location>
        <position position="143"/>
    </location>
</feature>
<feature type="cross-link" description="5-imidazolinone (Ala-Gly)" evidence="1">
    <location>
        <begin position="142"/>
        <end position="144"/>
    </location>
</feature>
<proteinExistence type="inferred from homology"/>
<reference key="1">
    <citation type="journal article" date="2007" name="Nat. Genet.">
        <title>Genomic analysis of Bartonella identifies type IV secretion systems as host adaptability factors.</title>
        <authorList>
            <person name="Saenz H.L."/>
            <person name="Engel P."/>
            <person name="Stoeckli M.C."/>
            <person name="Lanz C."/>
            <person name="Raddatz G."/>
            <person name="Vayssier-Taussat M."/>
            <person name="Birtles R."/>
            <person name="Schuster S.C."/>
            <person name="Dehio C."/>
        </authorList>
    </citation>
    <scope>NUCLEOTIDE SEQUENCE [LARGE SCALE GENOMIC DNA]</scope>
    <source>
        <strain>CIP 105476 / IBS 506</strain>
    </source>
</reference>
<sequence>MTIILKPGEVTLSELEAIYFNGEISKLHHDTHLVIERGAQRIAEIVAGSEPVYGINTGFGKLASIKIDADKVTVLQRNLILSHCCGVGDPLAENIVRLIMSLKLISLGRGASGVRLELVNLLENMLEKGVIPVIPEKGSVGASGDLAPLAHMAAVMMGEGEAFFQNIRMSGALALEKAGLSPIILEAKEGLALINGTQTSTALALAGLFRAYRALCGGLLAGALTTDATMGSTAPFHPDIHILRGHYGQIAVSKTLEKLVEDSEIRAAHLRGDERVQDPYCIRCQPQVMGACFDILLAAAKTLIIEANAVTDNPLILRNGEVVSGGNFHAEPVAFAADQIALALCEIGSISQRRIALMVDPAVSYGLPAFLAHNAGLNSGFMIAEVTAAALMSENKQMAYPASVDSTPTSANQEDHVSMACHGARRLLVMSENLFTLIGIETLIATQGIEYRAPLKTSTLLQSVMECLRKNIASLKEDRYLAPDLHQVHILVREGHLLSVLPETIFPSLSFQ</sequence>
<accession>A9IVW5</accession>
<evidence type="ECO:0000255" key="1">
    <source>
        <dbReference type="HAMAP-Rule" id="MF_00229"/>
    </source>
</evidence>
<gene>
    <name evidence="1" type="primary">hutH</name>
    <name type="ordered locus">BT_1465</name>
</gene>
<protein>
    <recommendedName>
        <fullName evidence="1">Histidine ammonia-lyase</fullName>
        <shortName evidence="1">Histidase</shortName>
        <ecNumber evidence="1">4.3.1.3</ecNumber>
    </recommendedName>
</protein>